<proteinExistence type="evidence at protein level"/>
<keyword id="KW-0225">Disease variant</keyword>
<keyword id="KW-0325">Glycoprotein</keyword>
<keyword id="KW-0333">Golgi apparatus</keyword>
<keyword id="KW-0472">Membrane</keyword>
<keyword id="KW-0479">Metal-binding</keyword>
<keyword id="KW-1267">Proteomics identification</keyword>
<keyword id="KW-1185">Reference proteome</keyword>
<keyword id="KW-0964">Secreted</keyword>
<keyword id="KW-0735">Signal-anchor</keyword>
<keyword id="KW-0808">Transferase</keyword>
<keyword id="KW-0812">Transmembrane</keyword>
<keyword id="KW-1133">Transmembrane helix</keyword>
<evidence type="ECO:0000255" key="1"/>
<evidence type="ECO:0000256" key="2">
    <source>
        <dbReference type="SAM" id="MobiDB-lite"/>
    </source>
</evidence>
<evidence type="ECO:0000269" key="3">
    <source>
    </source>
</evidence>
<evidence type="ECO:0000269" key="4">
    <source>
    </source>
</evidence>
<evidence type="ECO:0000269" key="5">
    <source>
    </source>
</evidence>
<evidence type="ECO:0000269" key="6">
    <source>
    </source>
</evidence>
<evidence type="ECO:0000269" key="7">
    <source>
    </source>
</evidence>
<evidence type="ECO:0000305" key="8"/>
<evidence type="ECO:0000305" key="9">
    <source>
    </source>
</evidence>
<evidence type="ECO:0000305" key="10">
    <source>
    </source>
</evidence>
<evidence type="ECO:0000312" key="11">
    <source>
        <dbReference type="HGNC" id="HGNC:17198"/>
    </source>
</evidence>
<feature type="chain" id="PRO_0000189558" description="Chondroitin sulfate synthase 1">
    <location>
        <begin position="1"/>
        <end position="802"/>
    </location>
</feature>
<feature type="topological domain" description="Cytoplasmic" evidence="1">
    <location>
        <begin position="1"/>
        <end position="7"/>
    </location>
</feature>
<feature type="transmembrane region" description="Helical; Signal-anchor for type II membrane protein" evidence="1">
    <location>
        <begin position="8"/>
        <end position="28"/>
    </location>
</feature>
<feature type="topological domain" description="Lumenal" evidence="1">
    <location>
        <begin position="29"/>
        <end position="802"/>
    </location>
</feature>
<feature type="region of interest" description="Disordered" evidence="2">
    <location>
        <begin position="34"/>
        <end position="82"/>
    </location>
</feature>
<feature type="compositionally biased region" description="Low complexity" evidence="2">
    <location>
        <begin position="49"/>
        <end position="59"/>
    </location>
</feature>
<feature type="compositionally biased region" description="Low complexity" evidence="2">
    <location>
        <begin position="66"/>
        <end position="78"/>
    </location>
</feature>
<feature type="binding site" evidence="1">
    <location>
        <position position="633"/>
    </location>
    <ligand>
        <name>a divalent metal cation</name>
        <dbReference type="ChEBI" id="CHEBI:60240"/>
    </ligand>
</feature>
<feature type="binding site" evidence="1">
    <location>
        <position position="747"/>
    </location>
    <ligand>
        <name>a divalent metal cation</name>
        <dbReference type="ChEBI" id="CHEBI:60240"/>
    </ligand>
</feature>
<feature type="glycosylation site" description="N-linked (GlcNAc...) asparagine" evidence="1">
    <location>
        <position position="189"/>
    </location>
</feature>
<feature type="glycosylation site" description="N-linked (GlcNAc...) asparagine" evidence="1">
    <location>
        <position position="623"/>
    </location>
</feature>
<feature type="glycosylation site" description="N-linked (GlcNAc...) asparagine" evidence="1">
    <location>
        <position position="796"/>
    </location>
</feature>
<feature type="sequence variant" id="VAR_065821" description="In TPBS." evidence="7">
    <location>
        <begin position="19"/>
        <end position="28"/>
    </location>
</feature>
<feature type="sequence variant" id="VAR_021173" description="In dbSNP:rs3743193.">
    <original>P</original>
    <variation>S</variation>
    <location>
        <position position="359"/>
    </location>
</feature>
<feature type="sequence variant" id="VAR_065822" description="In TPBS; dbSNP:rs387906985." evidence="7">
    <original>P</original>
    <variation>R</variation>
    <location>
        <position position="539"/>
    </location>
</feature>
<feature type="sequence variant" id="VAR_028009" description="In dbSNP:rs4426333.">
    <original>Q</original>
    <variation>H</variation>
    <location>
        <position position="652"/>
    </location>
</feature>
<feature type="sequence conflict" description="In Ref. 3; AAQ88893." evidence="8" ref="3">
    <original>Q</original>
    <variation>R</variation>
    <location>
        <position position="274"/>
    </location>
</feature>
<feature type="sequence conflict" description="In Ref. 1; BAB64936 and 2; BAA76834." evidence="8" ref="1 2">
    <original>R</original>
    <variation>T</variation>
    <location>
        <position position="588"/>
    </location>
</feature>
<name>CHSS1_HUMAN</name>
<sequence length="802" mass="91784">MAARGRRAWLSVLLGLVLGFVLASRLVLPRASELKRAGPRRRASPEGCRSGQAAASQAGGARGDARGAQLWPPGSDPDGGPRDRNFLFVGVMTAQKYLQTRAVAAYRTWSKTIPGKVQFFSSEGSDTSVPIPVVPLRGVDDSYPPQKKSFMMLKYMHDHYLDKYEWFMRADDDVYIKGDRLENFLRSLNSSEPLFLGQTGLGTTEEMGKLALEPGENFCMGGPGVIMSREVLRRMVPHIGKCLREMYTTHEDVEVGRCVRRFAGVQCVWSYEMQQLFYENYEQNKKGYIRDLHNSKIHQAITLHPNKNPPYQYRLHSYMLSRKISELRHRTIQLHREIVLMSKYSNTEIHKEDLQLGIPPSFMRFQPRQREEILEWEFLTGKYLYSAVDGQPPRRGMDSAQREALDDIVMQVMEMINANAKTRGRIIDFKEIQYGYRRVNPMYGAEYILDLLLLYKKHKGKKMTVPVRRHAYLQQTFSKIQFVEHEELDAQELAKRINQESGSLSFLSNSLKKLVPFQLPGSKSEHKEPKDKKINILIPLSGRFDMFVRFMGNFEKTCLIPNQNVKLVVLLFNSDSNPDKAKQVELMRDYRIKYPKADMQILPVSGEFSRALALEVGSSQFNNESLLFFCDVDLVFTTEFLQRCRANTVLGQQIYFPIIFSQYDPKIVYSGKVPSDNHFAFTQKTGFWRNYGFGITCIYKGDLVRVGGFDVSIQGWGLEDVDLFNKVVQAGLKTFRSQEVGVVHVHHPVFCDPNLDPKQYKMCLGSKASTYGSTQQLAEMWLEKNDPSYSKSSNNNGSVRTA</sequence>
<reference key="1">
    <citation type="journal article" date="2001" name="J. Biol. Chem.">
        <title>Molecular cloning and expression of a human chondroitin synthase.</title>
        <authorList>
            <person name="Kitagawa H."/>
            <person name="Uyama T."/>
            <person name="Sugahara K."/>
        </authorList>
    </citation>
    <scope>NUCLEOTIDE SEQUENCE [MRNA]</scope>
    <scope>FUNCTION</scope>
    <scope>TISSUE SPECIFICITY</scope>
    <scope>SUBCELLULAR LOCATION</scope>
</reference>
<reference key="2">
    <citation type="journal article" date="1999" name="DNA Res.">
        <title>Prediction of the coding sequences of unidentified human genes. XIII. The complete sequences of 100 new cDNA clones from brain which code for large proteins in vitro.</title>
        <authorList>
            <person name="Nagase T."/>
            <person name="Ishikawa K."/>
            <person name="Suyama M."/>
            <person name="Kikuno R."/>
            <person name="Hirosawa M."/>
            <person name="Miyajima N."/>
            <person name="Tanaka A."/>
            <person name="Kotani H."/>
            <person name="Nomura N."/>
            <person name="Ohara O."/>
        </authorList>
    </citation>
    <scope>NUCLEOTIDE SEQUENCE [LARGE SCALE MRNA]</scope>
    <source>
        <tissue>Brain</tissue>
    </source>
</reference>
<reference key="3">
    <citation type="journal article" date="2003" name="Genome Res.">
        <title>The secreted protein discovery initiative (SPDI), a large-scale effort to identify novel human secreted and transmembrane proteins: a bioinformatics assessment.</title>
        <authorList>
            <person name="Clark H.F."/>
            <person name="Gurney A.L."/>
            <person name="Abaya E."/>
            <person name="Baker K."/>
            <person name="Baldwin D.T."/>
            <person name="Brush J."/>
            <person name="Chen J."/>
            <person name="Chow B."/>
            <person name="Chui C."/>
            <person name="Crowley C."/>
            <person name="Currell B."/>
            <person name="Deuel B."/>
            <person name="Dowd P."/>
            <person name="Eaton D."/>
            <person name="Foster J.S."/>
            <person name="Grimaldi C."/>
            <person name="Gu Q."/>
            <person name="Hass P.E."/>
            <person name="Heldens S."/>
            <person name="Huang A."/>
            <person name="Kim H.S."/>
            <person name="Klimowski L."/>
            <person name="Jin Y."/>
            <person name="Johnson S."/>
            <person name="Lee J."/>
            <person name="Lewis L."/>
            <person name="Liao D."/>
            <person name="Mark M.R."/>
            <person name="Robbie E."/>
            <person name="Sanchez C."/>
            <person name="Schoenfeld J."/>
            <person name="Seshagiri S."/>
            <person name="Simmons L."/>
            <person name="Singh J."/>
            <person name="Smith V."/>
            <person name="Stinson J."/>
            <person name="Vagts A."/>
            <person name="Vandlen R.L."/>
            <person name="Watanabe C."/>
            <person name="Wieand D."/>
            <person name="Woods K."/>
            <person name="Xie M.-H."/>
            <person name="Yansura D.G."/>
            <person name="Yi S."/>
            <person name="Yu G."/>
            <person name="Yuan J."/>
            <person name="Zhang M."/>
            <person name="Zhang Z."/>
            <person name="Goddard A.D."/>
            <person name="Wood W.I."/>
            <person name="Godowski P.J."/>
            <person name="Gray A.M."/>
        </authorList>
    </citation>
    <scope>NUCLEOTIDE SEQUENCE [LARGE SCALE MRNA]</scope>
</reference>
<reference key="4">
    <citation type="journal article" date="2004" name="Genome Res.">
        <title>The status, quality, and expansion of the NIH full-length cDNA project: the Mammalian Gene Collection (MGC).</title>
        <authorList>
            <consortium name="The MGC Project Team"/>
        </authorList>
    </citation>
    <scope>NUCLEOTIDE SEQUENCE [LARGE SCALE MRNA]</scope>
    <source>
        <tissue>Brain</tissue>
    </source>
</reference>
<reference key="5">
    <citation type="journal article" date="2003" name="J. Biol. Chem.">
        <title>Molecular cloning of a chondroitin polymerizing factor that cooperates with chondroitin synthase for chondroitin polymerization.</title>
        <authorList>
            <person name="Kitagawa H."/>
            <person name="Izumikawa T."/>
            <person name="Uyama T."/>
            <person name="Sugahara K."/>
        </authorList>
    </citation>
    <scope>FUNCTION</scope>
    <scope>CATALYTIC ACTIVITY</scope>
</reference>
<reference key="6">
    <citation type="journal article" date="2003" name="J. Biol. Chem.">
        <title>Chondroitin sulfate synthase-3. Molecular cloning and characterization.</title>
        <authorList>
            <person name="Yada T."/>
            <person name="Sato T."/>
            <person name="Kaseyama H."/>
            <person name="Gotoh M."/>
            <person name="Iwasaki H."/>
            <person name="Kikuchi N."/>
            <person name="Kwon Y.-D."/>
            <person name="Togayachi A."/>
            <person name="Kudo T."/>
            <person name="Watanabe H."/>
            <person name="Narimatsu H."/>
            <person name="Kimata K."/>
        </authorList>
    </citation>
    <scope>COFACTOR</scope>
    <scope>TISSUE SPECIFICITY</scope>
</reference>
<reference key="7">
    <citation type="journal article" date="2010" name="Am. J. Hum. Genet.">
        <title>Loss of CHSY1, a secreted FRINGE enzyme, causes syndromic brachydactyly in humans via increased NOTCH signaling.</title>
        <authorList>
            <person name="Tian J."/>
            <person name="Ling L."/>
            <person name="Shboul M."/>
            <person name="Lee H."/>
            <person name="O'Connor B."/>
            <person name="Merriman B."/>
            <person name="Nelson S.F."/>
            <person name="Cool S."/>
            <person name="Ababneh O.H."/>
            <person name="Al-Hadidy A."/>
            <person name="Masri A."/>
            <person name="Hamamy H."/>
            <person name="Reversade B."/>
        </authorList>
    </citation>
    <scope>FUNCTION</scope>
    <scope>SUBCELLULAR LOCATION</scope>
    <scope>INVOLVEMENT IN TPBS</scope>
</reference>
<reference key="8">
    <citation type="journal article" date="2015" name="Proteomics">
        <title>N-terminome analysis of the human mitochondrial proteome.</title>
        <authorList>
            <person name="Vaca Jacome A.S."/>
            <person name="Rabilloud T."/>
            <person name="Schaeffer-Reiss C."/>
            <person name="Rompais M."/>
            <person name="Ayoub D."/>
            <person name="Lane L."/>
            <person name="Bairoch A."/>
            <person name="Van Dorsselaer A."/>
            <person name="Carapito C."/>
        </authorList>
    </citation>
    <scope>IDENTIFICATION BY MASS SPECTROMETRY [LARGE SCALE ANALYSIS]</scope>
</reference>
<reference key="9">
    <citation type="journal article" date="2010" name="Am. J. Hum. Genet.">
        <title>Temtamy preaxial brachydactyly syndrome is caused by loss-of-function mutations in chondroitin synthase 1, a potential target of BMP signaling.</title>
        <authorList>
            <person name="Li Y."/>
            <person name="Laue K."/>
            <person name="Temtamy S."/>
            <person name="Aglan M."/>
            <person name="Kotan L.D."/>
            <person name="Yigit G."/>
            <person name="Canan H."/>
            <person name="Pawlik B."/>
            <person name="Nurnberg G."/>
            <person name="Wakeling E.L."/>
            <person name="Quarrell O.W."/>
            <person name="Baessmann I."/>
            <person name="Lanktree M.B."/>
            <person name="Yilmaz M."/>
            <person name="Hegele R.A."/>
            <person name="Amr K."/>
            <person name="May K.W."/>
            <person name="Nurnberg P."/>
            <person name="Topaloglu A.K."/>
            <person name="Hammerschmidt M."/>
            <person name="Wollnik B."/>
        </authorList>
    </citation>
    <scope>VARIANTS TPBS 19-GLY--LEU-28 DEL AND ARG-539</scope>
</reference>
<organism>
    <name type="scientific">Homo sapiens</name>
    <name type="common">Human</name>
    <dbReference type="NCBI Taxonomy" id="9606"/>
    <lineage>
        <taxon>Eukaryota</taxon>
        <taxon>Metazoa</taxon>
        <taxon>Chordata</taxon>
        <taxon>Craniata</taxon>
        <taxon>Vertebrata</taxon>
        <taxon>Euteleostomi</taxon>
        <taxon>Mammalia</taxon>
        <taxon>Eutheria</taxon>
        <taxon>Euarchontoglires</taxon>
        <taxon>Primates</taxon>
        <taxon>Haplorrhini</taxon>
        <taxon>Catarrhini</taxon>
        <taxon>Hominidae</taxon>
        <taxon>Homo</taxon>
    </lineage>
</organism>
<gene>
    <name evidence="11" type="primary">CHSY1</name>
    <name type="synonym">CHSY</name>
    <name type="synonym">CSS1</name>
    <name type="synonym">KIAA0990</name>
    <name type="ORF">UNQ756/PRO1487</name>
</gene>
<dbReference type="EC" id="2.4.1.175" evidence="4"/>
<dbReference type="EC" id="2.4.1.226" evidence="4"/>
<dbReference type="EMBL" id="AB071402">
    <property type="protein sequence ID" value="BAB64936.1"/>
    <property type="molecule type" value="mRNA"/>
</dbReference>
<dbReference type="EMBL" id="AB023207">
    <property type="protein sequence ID" value="BAA76834.2"/>
    <property type="status" value="ALT_INIT"/>
    <property type="molecule type" value="mRNA"/>
</dbReference>
<dbReference type="EMBL" id="AY358529">
    <property type="protein sequence ID" value="AAQ88893.1"/>
    <property type="molecule type" value="mRNA"/>
</dbReference>
<dbReference type="EMBL" id="BC046247">
    <property type="protein sequence ID" value="AAH46247.1"/>
    <property type="molecule type" value="mRNA"/>
</dbReference>
<dbReference type="CCDS" id="CCDS10390.1"/>
<dbReference type="RefSeq" id="NP_055733.2">
    <property type="nucleotide sequence ID" value="NM_014918.4"/>
</dbReference>
<dbReference type="SMR" id="Q86X52"/>
<dbReference type="BioGRID" id="116526">
    <property type="interactions" value="59"/>
</dbReference>
<dbReference type="FunCoup" id="Q86X52">
    <property type="interactions" value="931"/>
</dbReference>
<dbReference type="IntAct" id="Q86X52">
    <property type="interactions" value="41"/>
</dbReference>
<dbReference type="MINT" id="Q86X52"/>
<dbReference type="STRING" id="9606.ENSP00000254190"/>
<dbReference type="CAZy" id="GT31">
    <property type="family name" value="Glycosyltransferase Family 31"/>
</dbReference>
<dbReference type="CAZy" id="GT7">
    <property type="family name" value="Glycosyltransferase Family 7"/>
</dbReference>
<dbReference type="GlyCosmos" id="Q86X52">
    <property type="glycosylation" value="3 sites, No reported glycans"/>
</dbReference>
<dbReference type="GlyGen" id="Q86X52">
    <property type="glycosylation" value="6 sites, 2 N-linked glycans (2 sites), 2 O-linked glycans (3 sites)"/>
</dbReference>
<dbReference type="iPTMnet" id="Q86X52"/>
<dbReference type="PhosphoSitePlus" id="Q86X52"/>
<dbReference type="BioMuta" id="CHSY1"/>
<dbReference type="DMDM" id="116241296"/>
<dbReference type="jPOST" id="Q86X52"/>
<dbReference type="MassIVE" id="Q86X52"/>
<dbReference type="PaxDb" id="9606-ENSP00000254190"/>
<dbReference type="PeptideAtlas" id="Q86X52"/>
<dbReference type="ProteomicsDB" id="70239"/>
<dbReference type="Pumba" id="Q86X52"/>
<dbReference type="Antibodypedia" id="43966">
    <property type="antibodies" value="138 antibodies from 23 providers"/>
</dbReference>
<dbReference type="DNASU" id="22856"/>
<dbReference type="Ensembl" id="ENST00000254190.4">
    <property type="protein sequence ID" value="ENSP00000254190.3"/>
    <property type="gene ID" value="ENSG00000131873.7"/>
</dbReference>
<dbReference type="GeneID" id="22856"/>
<dbReference type="KEGG" id="hsa:22856"/>
<dbReference type="MANE-Select" id="ENST00000254190.4">
    <property type="protein sequence ID" value="ENSP00000254190.3"/>
    <property type="RefSeq nucleotide sequence ID" value="NM_014918.5"/>
    <property type="RefSeq protein sequence ID" value="NP_055733.2"/>
</dbReference>
<dbReference type="UCSC" id="uc021sxt.1">
    <property type="organism name" value="human"/>
</dbReference>
<dbReference type="AGR" id="HGNC:17198"/>
<dbReference type="CTD" id="22856"/>
<dbReference type="DisGeNET" id="22856"/>
<dbReference type="GeneCards" id="CHSY1"/>
<dbReference type="HGNC" id="HGNC:17198">
    <property type="gene designation" value="CHSY1"/>
</dbReference>
<dbReference type="HPA" id="ENSG00000131873">
    <property type="expression patterns" value="Low tissue specificity"/>
</dbReference>
<dbReference type="MalaCards" id="CHSY1"/>
<dbReference type="MIM" id="605282">
    <property type="type" value="phenotype"/>
</dbReference>
<dbReference type="MIM" id="608183">
    <property type="type" value="gene"/>
</dbReference>
<dbReference type="neXtProt" id="NX_Q86X52"/>
<dbReference type="OpenTargets" id="ENSG00000131873"/>
<dbReference type="Orphanet" id="363417">
    <property type="disease" value="Temtamy preaxial brachydactyly syndrome"/>
</dbReference>
<dbReference type="PharmGKB" id="PA26509"/>
<dbReference type="VEuPathDB" id="HostDB:ENSG00000131873"/>
<dbReference type="eggNOG" id="KOG3588">
    <property type="taxonomic scope" value="Eukaryota"/>
</dbReference>
<dbReference type="GeneTree" id="ENSGT01050000244857"/>
<dbReference type="HOGENOM" id="CLU_016244_2_0_1"/>
<dbReference type="InParanoid" id="Q86X52"/>
<dbReference type="OMA" id="PAKNFLF"/>
<dbReference type="OrthoDB" id="431432at2759"/>
<dbReference type="PAN-GO" id="Q86X52">
    <property type="GO annotations" value="2 GO annotations based on evolutionary models"/>
</dbReference>
<dbReference type="PhylomeDB" id="Q86X52"/>
<dbReference type="TreeFam" id="TF318303"/>
<dbReference type="BioCyc" id="MetaCyc:HS13400-MONOMER"/>
<dbReference type="BRENDA" id="2.4.1.175">
    <property type="organism ID" value="2681"/>
</dbReference>
<dbReference type="BRENDA" id="2.4.1.226">
    <property type="organism ID" value="2681"/>
</dbReference>
<dbReference type="PathwayCommons" id="Q86X52"/>
<dbReference type="Reactome" id="R-HSA-2022870">
    <property type="pathway name" value="Chondroitin sulfate biosynthesis"/>
</dbReference>
<dbReference type="Reactome" id="R-HSA-3595177">
    <property type="pathway name" value="Defective CHSY1 causes TPBS"/>
</dbReference>
<dbReference type="SABIO-RK" id="Q86X52"/>
<dbReference type="SignaLink" id="Q86X52"/>
<dbReference type="BioGRID-ORCS" id="22856">
    <property type="hits" value="11 hits in 1160 CRISPR screens"/>
</dbReference>
<dbReference type="ChiTaRS" id="CHSY1">
    <property type="organism name" value="human"/>
</dbReference>
<dbReference type="GeneWiki" id="CHSY1"/>
<dbReference type="GenomeRNAi" id="22856"/>
<dbReference type="Pharos" id="Q86X52">
    <property type="development level" value="Tbio"/>
</dbReference>
<dbReference type="PRO" id="PR:Q86X52"/>
<dbReference type="Proteomes" id="UP000005640">
    <property type="component" value="Chromosome 15"/>
</dbReference>
<dbReference type="RNAct" id="Q86X52">
    <property type="molecule type" value="protein"/>
</dbReference>
<dbReference type="Bgee" id="ENSG00000131873">
    <property type="expression patterns" value="Expressed in tibia and 198 other cell types or tissues"/>
</dbReference>
<dbReference type="ExpressionAtlas" id="Q86X52">
    <property type="expression patterns" value="baseline and differential"/>
</dbReference>
<dbReference type="GO" id="GO:0005576">
    <property type="term" value="C:extracellular region"/>
    <property type="evidence" value="ECO:0000314"/>
    <property type="project" value="UniProtKB"/>
</dbReference>
<dbReference type="GO" id="GO:0032580">
    <property type="term" value="C:Golgi cisterna membrane"/>
    <property type="evidence" value="ECO:0007669"/>
    <property type="project" value="UniProtKB-SubCell"/>
</dbReference>
<dbReference type="GO" id="GO:0000139">
    <property type="term" value="C:Golgi membrane"/>
    <property type="evidence" value="ECO:0000304"/>
    <property type="project" value="Reactome"/>
</dbReference>
<dbReference type="GO" id="GO:0016020">
    <property type="term" value="C:membrane"/>
    <property type="evidence" value="ECO:0007005"/>
    <property type="project" value="UniProtKB"/>
</dbReference>
<dbReference type="GO" id="GO:0047238">
    <property type="term" value="F:glucuronosyl-N-acetylgalactosaminyl-proteoglycan 4-beta-N-acetylgalactosaminyltransferase activity"/>
    <property type="evidence" value="ECO:0000314"/>
    <property type="project" value="MGI"/>
</dbReference>
<dbReference type="GO" id="GO:0046872">
    <property type="term" value="F:metal ion binding"/>
    <property type="evidence" value="ECO:0007669"/>
    <property type="project" value="UniProtKB-KW"/>
</dbReference>
<dbReference type="GO" id="GO:0050510">
    <property type="term" value="F:N-acetylgalactosaminyl-proteoglycan 3-beta-glucuronosyltransferase activity"/>
    <property type="evidence" value="ECO:0000314"/>
    <property type="project" value="FlyBase"/>
</dbReference>
<dbReference type="GO" id="GO:0060349">
    <property type="term" value="P:bone morphogenesis"/>
    <property type="evidence" value="ECO:0007669"/>
    <property type="project" value="Ensembl"/>
</dbReference>
<dbReference type="GO" id="GO:0002063">
    <property type="term" value="P:chondrocyte development"/>
    <property type="evidence" value="ECO:0007669"/>
    <property type="project" value="Ensembl"/>
</dbReference>
<dbReference type="GO" id="GO:0050650">
    <property type="term" value="P:chondroitin sulfate proteoglycan biosynthetic process"/>
    <property type="evidence" value="ECO:0000314"/>
    <property type="project" value="MGI"/>
</dbReference>
<dbReference type="GO" id="GO:0030279">
    <property type="term" value="P:negative regulation of ossification"/>
    <property type="evidence" value="ECO:0000315"/>
    <property type="project" value="UniProtKB"/>
</dbReference>
<dbReference type="GO" id="GO:0045880">
    <property type="term" value="P:positive regulation of smoothened signaling pathway"/>
    <property type="evidence" value="ECO:0007669"/>
    <property type="project" value="Ensembl"/>
</dbReference>
<dbReference type="GO" id="GO:0009954">
    <property type="term" value="P:proximal/distal pattern formation"/>
    <property type="evidence" value="ECO:0007669"/>
    <property type="project" value="Ensembl"/>
</dbReference>
<dbReference type="GO" id="GO:0031667">
    <property type="term" value="P:response to nutrient levels"/>
    <property type="evidence" value="ECO:0007669"/>
    <property type="project" value="Ensembl"/>
</dbReference>
<dbReference type="GO" id="GO:0051923">
    <property type="term" value="P:sulfation"/>
    <property type="evidence" value="ECO:0007669"/>
    <property type="project" value="Ensembl"/>
</dbReference>
<dbReference type="FunFam" id="3.90.550.10:FF:000060">
    <property type="entry name" value="Hexosyltransferase"/>
    <property type="match status" value="1"/>
</dbReference>
<dbReference type="FunFam" id="3.90.550.50:FF:000004">
    <property type="entry name" value="Hexosyltransferase"/>
    <property type="match status" value="1"/>
</dbReference>
<dbReference type="Gene3D" id="3.90.550.50">
    <property type="match status" value="1"/>
</dbReference>
<dbReference type="Gene3D" id="3.90.550.10">
    <property type="entry name" value="Spore Coat Polysaccharide Biosynthesis Protein SpsA, Chain A"/>
    <property type="match status" value="1"/>
</dbReference>
<dbReference type="InterPro" id="IPR008428">
    <property type="entry name" value="Chond_GalNAc"/>
</dbReference>
<dbReference type="InterPro" id="IPR051227">
    <property type="entry name" value="CS_glycosyltransferase"/>
</dbReference>
<dbReference type="InterPro" id="IPR029044">
    <property type="entry name" value="Nucleotide-diphossugar_trans"/>
</dbReference>
<dbReference type="PANTHER" id="PTHR12369:SF42">
    <property type="entry name" value="CHONDROITIN SULFATE SYNTHASE 1"/>
    <property type="match status" value="1"/>
</dbReference>
<dbReference type="PANTHER" id="PTHR12369">
    <property type="entry name" value="CHONDROITIN SYNTHASE"/>
    <property type="match status" value="1"/>
</dbReference>
<dbReference type="Pfam" id="PF05679">
    <property type="entry name" value="CHGN"/>
    <property type="match status" value="1"/>
</dbReference>
<dbReference type="SUPFAM" id="SSF53448">
    <property type="entry name" value="Nucleotide-diphospho-sugar transferases"/>
    <property type="match status" value="2"/>
</dbReference>
<accession>Q86X52</accession>
<accession>Q6UX38</accession>
<accession>Q7LFU5</accession>
<accession>Q9Y2J5</accession>
<comment type="function">
    <text evidence="3 4 6">Has both beta-1,3-glucuronic acid and beta-1,4-N-acetylgalactosamine transferase activity. Transfers glucuronic acid (GlcUA) from UDP-GlcUA and N-acetylgalactosamine (GalNAc) from UDP-GalNAc to the non-reducing end of the elongating chondroitin polymer. Involved in the negative control of osteogenesis likely through the modulation of NOTCH signaling.</text>
</comment>
<comment type="catalytic activity">
    <reaction evidence="4">
        <text>3-O-(beta-D-GlcA-(1-&gt;3)-beta-D-GalNAc-(1-&gt;4)-beta-D-GlcA-(1-&gt;3)-beta-D-Gal-(1-&gt;3)-beta-D-Gal-(1-&gt;4)-beta-D-Xyl)-L-seryl-[protein] + UDP-N-acetyl-alpha-D-galactosamine = 3-O-(beta-D-GalNAc-(1-&gt;4)-beta-D-GlcA-(1-&gt;3)-beta-D-GalNAc-(1-&gt;4)-beta-D-GlcA-(1-&gt;3)-beta-D-Gal-(1-&gt;3)-beta-D-Gal-(1-&gt;4)-beta-D-Xyl)-L-seryl-[protein] + UDP + H(+)</text>
        <dbReference type="Rhea" id="RHEA:20800"/>
        <dbReference type="Rhea" id="RHEA-COMP:14058"/>
        <dbReference type="Rhea" id="RHEA-COMP:14059"/>
        <dbReference type="ChEBI" id="CHEBI:15378"/>
        <dbReference type="ChEBI" id="CHEBI:58223"/>
        <dbReference type="ChEBI" id="CHEBI:67138"/>
        <dbReference type="ChEBI" id="CHEBI:138442"/>
        <dbReference type="ChEBI" id="CHEBI:138443"/>
        <dbReference type="EC" id="2.4.1.175"/>
    </reaction>
    <physiologicalReaction direction="left-to-right" evidence="10">
        <dbReference type="Rhea" id="RHEA:20801"/>
    </physiologicalReaction>
</comment>
<comment type="catalytic activity">
    <reaction evidence="4">
        <text>3-O-{beta-D-GlcA-(1-&gt;3)-[beta-D-GalNAc-(1-&gt;4)-beta-D-GlcA-(1-&gt;3)](n)-beta-D-GalNAc-(1-&gt;4)-beta-D-GlcA-(1-&gt;3)-beta-D-Gal-(1-&gt;3)-beta-D-Gal-(1-&gt;4)-beta-D-Xyl}-L-seryl-[protein] + UDP-N-acetyl-alpha-D-galactosamine = 3-O-{[beta-D-GalNAc-(1-&gt;4)-beta-D-GlcA-(1-&gt;3)](n+1)-beta-D-GalNAc-(1-&gt;4)-beta-D-GlcA-(1-&gt;3)-beta-D-Gal-(1-&gt;3)-beta-D-Gal-(1-&gt;4)-beta-D-Xyl}-L-seryl-[protein] + UDP + H(+)</text>
        <dbReference type="Rhea" id="RHEA:55000"/>
        <dbReference type="Rhea" id="RHEA-COMP:14060"/>
        <dbReference type="Rhea" id="RHEA-COMP:14301"/>
        <dbReference type="ChEBI" id="CHEBI:15378"/>
        <dbReference type="ChEBI" id="CHEBI:58223"/>
        <dbReference type="ChEBI" id="CHEBI:67138"/>
        <dbReference type="ChEBI" id="CHEBI:138444"/>
        <dbReference type="ChEBI" id="CHEBI:138445"/>
        <dbReference type="EC" id="2.4.1.175"/>
    </reaction>
    <physiologicalReaction direction="left-to-right" evidence="10">
        <dbReference type="Rhea" id="RHEA:55001"/>
    </physiologicalReaction>
</comment>
<comment type="catalytic activity">
    <reaction evidence="4">
        <text>3-O-(beta-D-GalNAc-(1-&gt;4)-beta-D-GlcA-(1-&gt;3)-beta-D-Gal-(1-&gt;3)-beta-D-Gal-(1-&gt;4)-beta-D-Xyl)-L-seryl-[protein] + UDP-alpha-D-glucuronate = 3-O-(beta-D-GlcA-(1-&gt;3)-beta-D-GalNAc-(1-&gt;4)-beta-D-GlcA-(1-&gt;3)-beta-D-Gal-(1-&gt;3)-beta-D-Gal-(1-&gt;4)-beta-D-Xyl)-L-seryl-[protein] + UDP + H(+)</text>
        <dbReference type="Rhea" id="RHEA:23428"/>
        <dbReference type="Rhea" id="RHEA-COMP:12575"/>
        <dbReference type="Rhea" id="RHEA-COMP:14058"/>
        <dbReference type="ChEBI" id="CHEBI:15378"/>
        <dbReference type="ChEBI" id="CHEBI:58052"/>
        <dbReference type="ChEBI" id="CHEBI:58223"/>
        <dbReference type="ChEBI" id="CHEBI:132105"/>
        <dbReference type="ChEBI" id="CHEBI:138442"/>
        <dbReference type="EC" id="2.4.1.226"/>
    </reaction>
    <physiologicalReaction direction="left-to-right" evidence="10">
        <dbReference type="Rhea" id="RHEA:23429"/>
    </physiologicalReaction>
</comment>
<comment type="catalytic activity">
    <reaction evidence="4">
        <text>3-O-{[beta-D-GalNAc-(1-&gt;4)-beta-D-GlcA-(1-&gt;3)](n)-beta-D-GalNAc-(1-&gt;4)-beta-D-GlcA-(1-&gt;3)-beta-D-Gal-(1-&gt;3)-beta-D-Gal-(1-&gt;4)-beta-D-Xyl}-L-seryl-[protein] + UDP-alpha-D-glucuronate = 3-O-{beta-D-GlcA-(1-&gt;3)-[beta-D-GalNAc-(1-&gt;4)-beta-D-GlcA-(1-&gt;3)](n)-beta-D-GalNAc-(1-&gt;4)-beta-D-GlcA-(1-&gt;3)-beta-D-Gal-(1-&gt;3)-beta-D-Gal-(1-&gt;4)-beta-D-Xyl}-L-seryl-[protein] + UDP + H(+)</text>
        <dbReference type="Rhea" id="RHEA:54996"/>
        <dbReference type="Rhea" id="RHEA-COMP:14060"/>
        <dbReference type="Rhea" id="RHEA-COMP:14061"/>
        <dbReference type="ChEBI" id="CHEBI:15378"/>
        <dbReference type="ChEBI" id="CHEBI:58052"/>
        <dbReference type="ChEBI" id="CHEBI:58223"/>
        <dbReference type="ChEBI" id="CHEBI:138444"/>
        <dbReference type="ChEBI" id="CHEBI:138445"/>
        <dbReference type="EC" id="2.4.1.226"/>
    </reaction>
    <physiologicalReaction direction="left-to-right" evidence="10">
        <dbReference type="Rhea" id="RHEA:54997"/>
    </physiologicalReaction>
</comment>
<comment type="cofactor">
    <cofactor evidence="5">
        <name>Co(2+)</name>
        <dbReference type="ChEBI" id="CHEBI:48828"/>
    </cofactor>
    <cofactor evidence="5">
        <name>Mn(2+)</name>
        <dbReference type="ChEBI" id="CHEBI:29035"/>
    </cofactor>
    <cofactor evidence="5">
        <name>Cd(2+)</name>
        <dbReference type="ChEBI" id="CHEBI:48775"/>
    </cofactor>
    <text evidence="5">Divalent metal cations. Highest activities are measured with Co(2+), Mn(2+) and Cd(2+).</text>
</comment>
<comment type="subcellular location">
    <subcellularLocation>
        <location evidence="9">Golgi apparatus</location>
        <location evidence="9">Golgi stack membrane</location>
        <topology evidence="9">Single-pass type II membrane protein</topology>
    </subcellularLocation>
    <subcellularLocation>
        <location evidence="6">Secreted</location>
    </subcellularLocation>
</comment>
<comment type="tissue specificity">
    <text evidence="3 5">Ubiquitous, with the highest levels in placenta. Detected at low levels in brain, heart, skeletal muscle, colon, thymus, spleen, kidney, liver, adrenal gland, mammary gland, stomach, small intestine, lung and peripheral blood leukocytes.</text>
</comment>
<comment type="disease" evidence="6 7">
    <disease id="DI-03156">
        <name>Temtamy preaxial brachydactyly syndrome</name>
        <acronym>TPBS</acronym>
        <description>A syndrome characterized by multiple congenital anomalies, intellectual disability, sensorineural deafness, talon cusps of upper central incisors, growth retardation, and bilateral symmetric digital anomalies mainly in the form of preaxial brachydactyly and hyperphalangism.</description>
        <dbReference type="MIM" id="605282"/>
    </disease>
    <text>The disease is caused by variants affecting the gene represented in this entry.</text>
</comment>
<comment type="similarity">
    <text evidence="8">Belongs to the chondroitin N-acetylgalactosaminyltransferase family.</text>
</comment>
<comment type="sequence caution" evidence="8">
    <conflict type="erroneous initiation">
        <sequence resource="EMBL-CDS" id="BAA76834"/>
    </conflict>
    <text>Extended N-terminus.</text>
</comment>
<comment type="online information" name="Functional Glycomics Gateway - GTase">
    <link uri="http://www.functionalglycomics.org/glycomics/molecule/jsp/glycoEnzyme/viewGlycoEnzyme.jsp?gbpId=gt_hum_445"/>
    <text>Chondroitin sulfate synthase 1</text>
</comment>
<protein>
    <recommendedName>
        <fullName evidence="8">Chondroitin sulfate synthase 1</fullName>
        <ecNumber evidence="4">2.4.1.175</ecNumber>
        <ecNumber evidence="4">2.4.1.226</ecNumber>
    </recommendedName>
    <alternativeName>
        <fullName>Chondroitin glucuronyltransferase 1</fullName>
    </alternativeName>
    <alternativeName>
        <fullName>Chondroitin synthase 1</fullName>
        <shortName>ChSy-1</shortName>
    </alternativeName>
    <alternativeName>
        <fullName>Glucuronosyl-N-acetylgalactosaminyl-proteoglycan 4-beta-N-acetylgalactosaminyltransferase 1</fullName>
    </alternativeName>
    <alternativeName>
        <fullName>N-acetylgalactosaminyl-proteoglycan 3-beta-glucuronosyltransferase 1</fullName>
    </alternativeName>
    <alternativeName>
        <fullName>N-acetylgalactosaminyltransferase 1</fullName>
    </alternativeName>
</protein>